<comment type="catalytic activity">
    <reaction>
        <text>CMP + ATP = CDP + ADP</text>
        <dbReference type="Rhea" id="RHEA:11600"/>
        <dbReference type="ChEBI" id="CHEBI:30616"/>
        <dbReference type="ChEBI" id="CHEBI:58069"/>
        <dbReference type="ChEBI" id="CHEBI:60377"/>
        <dbReference type="ChEBI" id="CHEBI:456216"/>
        <dbReference type="EC" id="2.7.4.25"/>
    </reaction>
</comment>
<comment type="catalytic activity">
    <reaction>
        <text>dCMP + ATP = dCDP + ADP</text>
        <dbReference type="Rhea" id="RHEA:25094"/>
        <dbReference type="ChEBI" id="CHEBI:30616"/>
        <dbReference type="ChEBI" id="CHEBI:57566"/>
        <dbReference type="ChEBI" id="CHEBI:58593"/>
        <dbReference type="ChEBI" id="CHEBI:456216"/>
        <dbReference type="EC" id="2.7.4.25"/>
    </reaction>
</comment>
<comment type="similarity">
    <text evidence="2">Belongs to the cytidylate kinase family. Type 1 subfamily.</text>
</comment>
<protein>
    <recommendedName>
        <fullName>Probable cytidylate kinase</fullName>
        <shortName>CK</shortName>
        <ecNumber>2.7.4.25</ecNumber>
    </recommendedName>
    <alternativeName>
        <fullName>Cytidine monophosphate kinase</fullName>
        <shortName>CMP kinase</shortName>
    </alternativeName>
</protein>
<name>KCY_ENCCU</name>
<sequence length="220" mass="25208">MKTYKIAVDGPAASGKSSTSDLVARKLGFSHLISGNLYRAVTYGLVRRFGEVRPGDEEQKRFVLELSIEVRNNRVFLDGEDVSESLRKEVVDRHVVSVAREKYIREKVFTIQRSVIDLEKRGIVVDGRDIATRIMPNADLKVFLTASPETRARRRYMEGGSESYEELLESIKKRDHNDRTREHDPLVATCDSIVIENDSMTLEETADEIIRLFRRVESFN</sequence>
<reference key="1">
    <citation type="journal article" date="2001" name="Nature">
        <title>Genome sequence and gene compaction of the eukaryote parasite Encephalitozoon cuniculi.</title>
        <authorList>
            <person name="Katinka M.D."/>
            <person name="Duprat S."/>
            <person name="Cornillot E."/>
            <person name="Metenier G."/>
            <person name="Thomarat F."/>
            <person name="Prensier G."/>
            <person name="Barbe V."/>
            <person name="Peyretaillade E."/>
            <person name="Brottier P."/>
            <person name="Wincker P."/>
            <person name="Delbac F."/>
            <person name="El Alaoui H."/>
            <person name="Peyret P."/>
            <person name="Saurin W."/>
            <person name="Gouy M."/>
            <person name="Weissenbach J."/>
            <person name="Vivares C.P."/>
        </authorList>
    </citation>
    <scope>NUCLEOTIDE SEQUENCE [LARGE SCALE GENOMIC DNA]</scope>
    <source>
        <strain>GB-M1</strain>
    </source>
</reference>
<feature type="chain" id="PRO_0000388422" description="Probable cytidylate kinase">
    <location>
        <begin position="1"/>
        <end position="220"/>
    </location>
</feature>
<feature type="binding site" evidence="1">
    <location>
        <begin position="10"/>
        <end position="18"/>
    </location>
    <ligand>
        <name>ATP</name>
        <dbReference type="ChEBI" id="CHEBI:30616"/>
    </ligand>
</feature>
<feature type="strand" evidence="3">
    <location>
        <begin position="4"/>
        <end position="9"/>
    </location>
</feature>
<feature type="helix" evidence="3">
    <location>
        <begin position="16"/>
        <end position="27"/>
    </location>
</feature>
<feature type="strand" evidence="3">
    <location>
        <begin position="30"/>
        <end position="33"/>
    </location>
</feature>
<feature type="helix" evidence="3">
    <location>
        <begin position="35"/>
        <end position="49"/>
    </location>
</feature>
<feature type="helix" evidence="3">
    <location>
        <begin position="57"/>
        <end position="65"/>
    </location>
</feature>
<feature type="strand" evidence="3">
    <location>
        <begin position="68"/>
        <end position="71"/>
    </location>
</feature>
<feature type="strand" evidence="3">
    <location>
        <begin position="74"/>
        <end position="77"/>
    </location>
</feature>
<feature type="helix" evidence="3">
    <location>
        <begin position="83"/>
        <end position="85"/>
    </location>
</feature>
<feature type="helix" evidence="3">
    <location>
        <begin position="89"/>
        <end position="99"/>
    </location>
</feature>
<feature type="helix" evidence="3">
    <location>
        <begin position="102"/>
        <end position="118"/>
    </location>
</feature>
<feature type="strand" evidence="3">
    <location>
        <begin position="120"/>
        <end position="129"/>
    </location>
</feature>
<feature type="helix" evidence="3">
    <location>
        <begin position="130"/>
        <end position="134"/>
    </location>
</feature>
<feature type="strand" evidence="3">
    <location>
        <begin position="139"/>
        <end position="145"/>
    </location>
</feature>
<feature type="helix" evidence="3">
    <location>
        <begin position="148"/>
        <end position="157"/>
    </location>
</feature>
<feature type="helix" evidence="3">
    <location>
        <begin position="164"/>
        <end position="180"/>
    </location>
</feature>
<feature type="strand" evidence="3">
    <location>
        <begin position="181"/>
        <end position="184"/>
    </location>
</feature>
<feature type="strand" evidence="3">
    <location>
        <begin position="193"/>
        <end position="196"/>
    </location>
</feature>
<feature type="helix" evidence="3">
    <location>
        <begin position="202"/>
        <end position="220"/>
    </location>
</feature>
<organism>
    <name type="scientific">Encephalitozoon cuniculi (strain GB-M1)</name>
    <name type="common">Microsporidian parasite</name>
    <dbReference type="NCBI Taxonomy" id="284813"/>
    <lineage>
        <taxon>Eukaryota</taxon>
        <taxon>Fungi</taxon>
        <taxon>Fungi incertae sedis</taxon>
        <taxon>Microsporidia</taxon>
        <taxon>Unikaryonidae</taxon>
        <taxon>Encephalitozoon</taxon>
    </lineage>
</organism>
<gene>
    <name type="ordered locus">ECU03_1270</name>
</gene>
<dbReference type="EC" id="2.7.4.25"/>
<dbReference type="EMBL" id="AL590443">
    <property type="protein sequence ID" value="CAD26270.1"/>
    <property type="molecule type" value="Genomic_DNA"/>
</dbReference>
<dbReference type="RefSeq" id="NP_597635.1">
    <property type="nucleotide sequence ID" value="NM_001040999.1"/>
</dbReference>
<dbReference type="PDB" id="7L4A">
    <property type="method" value="X-ray"/>
    <property type="resolution" value="1.50 A"/>
    <property type="chains" value="A=1-220"/>
</dbReference>
<dbReference type="PDBsum" id="7L4A"/>
<dbReference type="SMR" id="Q8SS83"/>
<dbReference type="STRING" id="284813.Q8SS83"/>
<dbReference type="GeneID" id="858797"/>
<dbReference type="KEGG" id="ecu:ECU03_1270"/>
<dbReference type="VEuPathDB" id="MicrosporidiaDB:ECU03_1270"/>
<dbReference type="HOGENOM" id="CLU_079959_0_2_1"/>
<dbReference type="InParanoid" id="Q8SS83"/>
<dbReference type="OMA" id="RWTINHA"/>
<dbReference type="OrthoDB" id="10263145at2759"/>
<dbReference type="Proteomes" id="UP000000819">
    <property type="component" value="Chromosome III"/>
</dbReference>
<dbReference type="GO" id="GO:0005524">
    <property type="term" value="F:ATP binding"/>
    <property type="evidence" value="ECO:0007669"/>
    <property type="project" value="UniProtKB-KW"/>
</dbReference>
<dbReference type="GO" id="GO:0036430">
    <property type="term" value="F:CMP kinase activity"/>
    <property type="evidence" value="ECO:0007669"/>
    <property type="project" value="RHEA"/>
</dbReference>
<dbReference type="GO" id="GO:0036431">
    <property type="term" value="F:dCMP kinase activity"/>
    <property type="evidence" value="ECO:0007669"/>
    <property type="project" value="RHEA"/>
</dbReference>
<dbReference type="CDD" id="cd02020">
    <property type="entry name" value="CMPK"/>
    <property type="match status" value="1"/>
</dbReference>
<dbReference type="Gene3D" id="3.40.50.300">
    <property type="entry name" value="P-loop containing nucleotide triphosphate hydrolases"/>
    <property type="match status" value="1"/>
</dbReference>
<dbReference type="HAMAP" id="MF_00238">
    <property type="entry name" value="Cytidyl_kinase_type1"/>
    <property type="match status" value="1"/>
</dbReference>
<dbReference type="InterPro" id="IPR003136">
    <property type="entry name" value="Cytidylate_kin"/>
</dbReference>
<dbReference type="InterPro" id="IPR011994">
    <property type="entry name" value="Cytidylate_kinase_dom"/>
</dbReference>
<dbReference type="InterPro" id="IPR027417">
    <property type="entry name" value="P-loop_NTPase"/>
</dbReference>
<dbReference type="NCBIfam" id="TIGR00017">
    <property type="entry name" value="cmk"/>
    <property type="match status" value="1"/>
</dbReference>
<dbReference type="Pfam" id="PF02224">
    <property type="entry name" value="Cytidylate_kin"/>
    <property type="match status" value="1"/>
</dbReference>
<dbReference type="SUPFAM" id="SSF52540">
    <property type="entry name" value="P-loop containing nucleoside triphosphate hydrolases"/>
    <property type="match status" value="1"/>
</dbReference>
<evidence type="ECO:0000250" key="1"/>
<evidence type="ECO:0000305" key="2"/>
<evidence type="ECO:0007829" key="3">
    <source>
        <dbReference type="PDB" id="7L4A"/>
    </source>
</evidence>
<keyword id="KW-0002">3D-structure</keyword>
<keyword id="KW-0067">ATP-binding</keyword>
<keyword id="KW-0418">Kinase</keyword>
<keyword id="KW-0547">Nucleotide-binding</keyword>
<keyword id="KW-1185">Reference proteome</keyword>
<keyword id="KW-0808">Transferase</keyword>
<accession>Q8SS83</accession>
<proteinExistence type="evidence at protein level"/>